<accession>Q6ENG9</accession>
<organism>
    <name type="scientific">Oryza nivara</name>
    <name type="common">Indian wild rice</name>
    <name type="synonym">Oryza sativa f. spontanea</name>
    <dbReference type="NCBI Taxonomy" id="4536"/>
    <lineage>
        <taxon>Eukaryota</taxon>
        <taxon>Viridiplantae</taxon>
        <taxon>Streptophyta</taxon>
        <taxon>Embryophyta</taxon>
        <taxon>Tracheophyta</taxon>
        <taxon>Spermatophyta</taxon>
        <taxon>Magnoliopsida</taxon>
        <taxon>Liliopsida</taxon>
        <taxon>Poales</taxon>
        <taxon>Poaceae</taxon>
        <taxon>BOP clade</taxon>
        <taxon>Oryzoideae</taxon>
        <taxon>Oryzeae</taxon>
        <taxon>Oryzinae</taxon>
        <taxon>Oryza</taxon>
    </lineage>
</organism>
<reference key="1">
    <citation type="journal article" date="2004" name="Gene">
        <title>The complete nucleotide sequence of wild rice (Oryza nivara) chloroplast genome: first genome wide comparative sequence analysis of wild and cultivated rice.</title>
        <authorList>
            <person name="Masood M.S."/>
            <person name="Nishikawa T."/>
            <person name="Fukuoka S."/>
            <person name="Njenga P.K."/>
            <person name="Tsudzuki T."/>
            <person name="Kadowaki K."/>
        </authorList>
    </citation>
    <scope>NUCLEOTIDE SEQUENCE [LARGE SCALE GENOMIC DNA]</scope>
    <source>
        <strain evidence="2">cv. SL10</strain>
    </source>
</reference>
<name>NU3C_ORYNI</name>
<sequence>MFLLHEYDIFWAFLIIASLIPILAFWISALLAPVREGPEKLSSYESGIEPMGGAWLQFRIRYYMFALVFVVFDVETVFLYPWAMSFDVLGISVFIEAFIFVLILVVGLVYAWRKGALEWS</sequence>
<feature type="chain" id="PRO_0000117852" description="NAD(P)H-quinone oxidoreductase subunit 3, chloroplastic">
    <location>
        <begin position="1"/>
        <end position="120"/>
    </location>
</feature>
<feature type="transmembrane region" description="Helical" evidence="1">
    <location>
        <begin position="9"/>
        <end position="29"/>
    </location>
</feature>
<feature type="transmembrane region" description="Helical" evidence="1">
    <location>
        <begin position="64"/>
        <end position="84"/>
    </location>
</feature>
<feature type="transmembrane region" description="Helical" evidence="1">
    <location>
        <begin position="88"/>
        <end position="108"/>
    </location>
</feature>
<geneLocation type="chloroplast"/>
<protein>
    <recommendedName>
        <fullName evidence="1">NAD(P)H-quinone oxidoreductase subunit 3, chloroplastic</fullName>
        <ecNumber evidence="1">7.1.1.-</ecNumber>
    </recommendedName>
    <alternativeName>
        <fullName evidence="1">NAD(P)H dehydrogenase subunit 3</fullName>
    </alternativeName>
    <alternativeName>
        <fullName evidence="1">NADH-plastoquinone oxidoreductase subunit 3</fullName>
    </alternativeName>
</protein>
<proteinExistence type="inferred from homology"/>
<keyword id="KW-0150">Chloroplast</keyword>
<keyword id="KW-0472">Membrane</keyword>
<keyword id="KW-0520">NAD</keyword>
<keyword id="KW-0521">NADP</keyword>
<keyword id="KW-0934">Plastid</keyword>
<keyword id="KW-0618">Plastoquinone</keyword>
<keyword id="KW-0874">Quinone</keyword>
<keyword id="KW-1185">Reference proteome</keyword>
<keyword id="KW-0793">Thylakoid</keyword>
<keyword id="KW-1278">Translocase</keyword>
<keyword id="KW-0812">Transmembrane</keyword>
<keyword id="KW-1133">Transmembrane helix</keyword>
<keyword id="KW-0813">Transport</keyword>
<evidence type="ECO:0000255" key="1">
    <source>
        <dbReference type="HAMAP-Rule" id="MF_01394"/>
    </source>
</evidence>
<evidence type="ECO:0000312" key="2">
    <source>
        <dbReference type="Proteomes" id="UP000006591"/>
    </source>
</evidence>
<gene>
    <name evidence="1" type="primary">ndhC</name>
</gene>
<comment type="function">
    <text evidence="1">NDH shuttles electrons from NAD(P)H:plastoquinone, via FMN and iron-sulfur (Fe-S) centers, to quinones in the photosynthetic chain and possibly in a chloroplast respiratory chain. The immediate electron acceptor for the enzyme in this species is believed to be plastoquinone. Couples the redox reaction to proton translocation, and thus conserves the redox energy in a proton gradient.</text>
</comment>
<comment type="catalytic activity">
    <reaction evidence="1">
        <text>a plastoquinone + NADH + (n+1) H(+)(in) = a plastoquinol + NAD(+) + n H(+)(out)</text>
        <dbReference type="Rhea" id="RHEA:42608"/>
        <dbReference type="Rhea" id="RHEA-COMP:9561"/>
        <dbReference type="Rhea" id="RHEA-COMP:9562"/>
        <dbReference type="ChEBI" id="CHEBI:15378"/>
        <dbReference type="ChEBI" id="CHEBI:17757"/>
        <dbReference type="ChEBI" id="CHEBI:57540"/>
        <dbReference type="ChEBI" id="CHEBI:57945"/>
        <dbReference type="ChEBI" id="CHEBI:62192"/>
    </reaction>
</comment>
<comment type="catalytic activity">
    <reaction evidence="1">
        <text>a plastoquinone + NADPH + (n+1) H(+)(in) = a plastoquinol + NADP(+) + n H(+)(out)</text>
        <dbReference type="Rhea" id="RHEA:42612"/>
        <dbReference type="Rhea" id="RHEA-COMP:9561"/>
        <dbReference type="Rhea" id="RHEA-COMP:9562"/>
        <dbReference type="ChEBI" id="CHEBI:15378"/>
        <dbReference type="ChEBI" id="CHEBI:17757"/>
        <dbReference type="ChEBI" id="CHEBI:57783"/>
        <dbReference type="ChEBI" id="CHEBI:58349"/>
        <dbReference type="ChEBI" id="CHEBI:62192"/>
    </reaction>
</comment>
<comment type="subunit">
    <text evidence="1">NDH is composed of at least 16 different subunits, 5 of which are encoded in the nucleus.</text>
</comment>
<comment type="subcellular location">
    <subcellularLocation>
        <location evidence="1">Plastid</location>
        <location evidence="1">Chloroplast thylakoid membrane</location>
        <topology evidence="1">Multi-pass membrane protein</topology>
    </subcellularLocation>
</comment>
<comment type="similarity">
    <text evidence="1">Belongs to the complex I subunit 3 family.</text>
</comment>
<dbReference type="EC" id="7.1.1.-" evidence="1"/>
<dbReference type="EMBL" id="AP006728">
    <property type="protein sequence ID" value="BAD26783.1"/>
    <property type="molecule type" value="Genomic_DNA"/>
</dbReference>
<dbReference type="RefSeq" id="YP_052754.1">
    <property type="nucleotide sequence ID" value="NC_005973.1"/>
</dbReference>
<dbReference type="SMR" id="Q6ENG9"/>
<dbReference type="STRING" id="4536.Q6ENG9"/>
<dbReference type="GeneID" id="2885901"/>
<dbReference type="Proteomes" id="UP000006591">
    <property type="component" value="Chloroplast"/>
</dbReference>
<dbReference type="GO" id="GO:0009535">
    <property type="term" value="C:chloroplast thylakoid membrane"/>
    <property type="evidence" value="ECO:0007669"/>
    <property type="project" value="UniProtKB-SubCell"/>
</dbReference>
<dbReference type="GO" id="GO:0030964">
    <property type="term" value="C:NADH dehydrogenase complex"/>
    <property type="evidence" value="ECO:0007669"/>
    <property type="project" value="TreeGrafter"/>
</dbReference>
<dbReference type="GO" id="GO:0009536">
    <property type="term" value="C:plastid"/>
    <property type="evidence" value="ECO:0000305"/>
    <property type="project" value="Gramene"/>
</dbReference>
<dbReference type="GO" id="GO:0008137">
    <property type="term" value="F:NADH dehydrogenase (ubiquinone) activity"/>
    <property type="evidence" value="ECO:0007669"/>
    <property type="project" value="InterPro"/>
</dbReference>
<dbReference type="GO" id="GO:0048038">
    <property type="term" value="F:quinone binding"/>
    <property type="evidence" value="ECO:0007669"/>
    <property type="project" value="UniProtKB-KW"/>
</dbReference>
<dbReference type="GO" id="GO:0019684">
    <property type="term" value="P:photosynthesis, light reaction"/>
    <property type="evidence" value="ECO:0007669"/>
    <property type="project" value="UniProtKB-UniRule"/>
</dbReference>
<dbReference type="FunFam" id="1.20.58.1610:FF:000001">
    <property type="entry name" value="NAD(P)H-quinone oxidoreductase subunit 3, chloroplastic"/>
    <property type="match status" value="1"/>
</dbReference>
<dbReference type="Gene3D" id="1.20.58.1610">
    <property type="entry name" value="NADH:ubiquinone/plastoquinone oxidoreductase, chain 3"/>
    <property type="match status" value="1"/>
</dbReference>
<dbReference type="HAMAP" id="MF_01394">
    <property type="entry name" value="NDH1_NuoA"/>
    <property type="match status" value="1"/>
</dbReference>
<dbReference type="InterPro" id="IPR023043">
    <property type="entry name" value="NAD(P)H_OxRDtase_bac/plastid"/>
</dbReference>
<dbReference type="InterPro" id="IPR000440">
    <property type="entry name" value="NADH_UbQ/plastoQ_OxRdtase_su3"/>
</dbReference>
<dbReference type="InterPro" id="IPR038430">
    <property type="entry name" value="NDAH_ubi_oxred_su3_sf"/>
</dbReference>
<dbReference type="PANTHER" id="PTHR11058">
    <property type="entry name" value="NADH-UBIQUINONE OXIDOREDUCTASE CHAIN 3"/>
    <property type="match status" value="1"/>
</dbReference>
<dbReference type="PANTHER" id="PTHR11058:SF9">
    <property type="entry name" value="NADH-UBIQUINONE OXIDOREDUCTASE CHAIN 3"/>
    <property type="match status" value="1"/>
</dbReference>
<dbReference type="Pfam" id="PF00507">
    <property type="entry name" value="Oxidored_q4"/>
    <property type="match status" value="1"/>
</dbReference>